<comment type="function">
    <text evidence="1">Component of the Mediator complex, a coactivator involved in the regulated transcription of nearly all RNA polymerase II-dependent genes. Mediator functions as a bridge to convey information from gene-specific regulatory proteins to the basal RNA polymerase II transcription machinery. Mediator is recruited to promoters by direct interactions with regulatory proteins and serves as a scaffold for the assembly of a functional preinitiation complex with RNA polymerase II and the general transcription factors (By similarity).</text>
</comment>
<comment type="subunit">
    <text evidence="1">Component of the Mediator complex.</text>
</comment>
<comment type="subcellular location">
    <subcellularLocation>
        <location evidence="1">Nucleus</location>
    </subcellularLocation>
</comment>
<comment type="similarity">
    <text evidence="4">Belongs to the Mediator complex subunit 21 family.</text>
</comment>
<keyword id="KW-0010">Activator</keyword>
<keyword id="KW-0175">Coiled coil</keyword>
<keyword id="KW-0539">Nucleus</keyword>
<keyword id="KW-1185">Reference proteome</keyword>
<keyword id="KW-0804">Transcription</keyword>
<keyword id="KW-0805">Transcription regulation</keyword>
<reference key="1">
    <citation type="journal article" date="2007" name="Nat. Biotechnol.">
        <title>Genome sequence of the lignocellulose-bioconverting and xylose-fermenting yeast Pichia stipitis.</title>
        <authorList>
            <person name="Jeffries T.W."/>
            <person name="Grigoriev I.V."/>
            <person name="Grimwood J."/>
            <person name="Laplaza J.M."/>
            <person name="Aerts A."/>
            <person name="Salamov A."/>
            <person name="Schmutz J."/>
            <person name="Lindquist E."/>
            <person name="Dehal P."/>
            <person name="Shapiro H."/>
            <person name="Jin Y.-S."/>
            <person name="Passoth V."/>
            <person name="Richardson P.M."/>
        </authorList>
    </citation>
    <scope>NUCLEOTIDE SEQUENCE [LARGE SCALE GENOMIC DNA]</scope>
    <source>
        <strain>ATCC 58785 / CBS 6054 / NBRC 10063 / NRRL Y-11545</strain>
    </source>
</reference>
<protein>
    <recommendedName>
        <fullName>Mediator of RNA polymerase II transcription subunit 21</fullName>
    </recommendedName>
    <alternativeName>
        <fullName>Mediator complex subunit 21</fullName>
    </alternativeName>
</protein>
<proteinExistence type="inferred from homology"/>
<gene>
    <name type="primary">SRB7</name>
    <name type="synonym">MED21</name>
    <name type="ORF">PICST_30897</name>
</gene>
<dbReference type="EMBL" id="CP000497">
    <property type="protein sequence ID" value="ABN65489.1"/>
    <property type="molecule type" value="Genomic_DNA"/>
</dbReference>
<dbReference type="RefSeq" id="XP_001383518.1">
    <property type="nucleotide sequence ID" value="XM_001383481.1"/>
</dbReference>
<dbReference type="SMR" id="A3LS24"/>
<dbReference type="FunCoup" id="A3LS24">
    <property type="interactions" value="291"/>
</dbReference>
<dbReference type="STRING" id="322104.A3LS24"/>
<dbReference type="GeneID" id="4838115"/>
<dbReference type="KEGG" id="pic:PICST_30897"/>
<dbReference type="eggNOG" id="KOG1510">
    <property type="taxonomic scope" value="Eukaryota"/>
</dbReference>
<dbReference type="HOGENOM" id="CLU_094271_0_1_1"/>
<dbReference type="InParanoid" id="A3LS24"/>
<dbReference type="OMA" id="LTTYHDH"/>
<dbReference type="OrthoDB" id="526653at2759"/>
<dbReference type="Proteomes" id="UP000002258">
    <property type="component" value="Chromosome 3"/>
</dbReference>
<dbReference type="GO" id="GO:0070847">
    <property type="term" value="C:core mediator complex"/>
    <property type="evidence" value="ECO:0007669"/>
    <property type="project" value="EnsemblFungi"/>
</dbReference>
<dbReference type="GO" id="GO:0016592">
    <property type="term" value="C:mediator complex"/>
    <property type="evidence" value="ECO:0007669"/>
    <property type="project" value="EnsemblFungi"/>
</dbReference>
<dbReference type="GO" id="GO:0061629">
    <property type="term" value="F:RNA polymerase II-specific DNA-binding transcription factor binding"/>
    <property type="evidence" value="ECO:0007669"/>
    <property type="project" value="EnsemblFungi"/>
</dbReference>
<dbReference type="GO" id="GO:0003713">
    <property type="term" value="F:transcription coactivator activity"/>
    <property type="evidence" value="ECO:0007669"/>
    <property type="project" value="EnsemblFungi"/>
</dbReference>
<dbReference type="GO" id="GO:0003714">
    <property type="term" value="F:transcription corepressor activity"/>
    <property type="evidence" value="ECO:0007669"/>
    <property type="project" value="EnsemblFungi"/>
</dbReference>
<dbReference type="GO" id="GO:0000122">
    <property type="term" value="P:negative regulation of transcription by RNA polymerase II"/>
    <property type="evidence" value="ECO:0007669"/>
    <property type="project" value="EnsemblFungi"/>
</dbReference>
<dbReference type="GO" id="GO:0032968">
    <property type="term" value="P:positive regulation of transcription elongation by RNA polymerase II"/>
    <property type="evidence" value="ECO:0007669"/>
    <property type="project" value="EnsemblFungi"/>
</dbReference>
<dbReference type="GO" id="GO:0060261">
    <property type="term" value="P:positive regulation of transcription initiation by RNA polymerase II"/>
    <property type="evidence" value="ECO:0007669"/>
    <property type="project" value="EnsemblFungi"/>
</dbReference>
<dbReference type="GO" id="GO:0051123">
    <property type="term" value="P:RNA polymerase II preinitiation complex assembly"/>
    <property type="evidence" value="ECO:0007669"/>
    <property type="project" value="EnsemblFungi"/>
</dbReference>
<dbReference type="Gene3D" id="6.10.280.10">
    <property type="entry name" value="Mediator complex, subunit Med21"/>
    <property type="match status" value="1"/>
</dbReference>
<dbReference type="InterPro" id="IPR037212">
    <property type="entry name" value="Med7/Med21-like"/>
</dbReference>
<dbReference type="InterPro" id="IPR021384">
    <property type="entry name" value="Mediator_Med21"/>
</dbReference>
<dbReference type="PANTHER" id="PTHR13381:SF0">
    <property type="entry name" value="MEDIATOR OF RNA POLYMERASE II TRANSCRIPTION SUBUNIT 21"/>
    <property type="match status" value="1"/>
</dbReference>
<dbReference type="PANTHER" id="PTHR13381">
    <property type="entry name" value="RNA POLYMERASE II HOLOENZYME COMPONENT SRB7"/>
    <property type="match status" value="1"/>
</dbReference>
<dbReference type="Pfam" id="PF11221">
    <property type="entry name" value="Med21"/>
    <property type="match status" value="1"/>
</dbReference>
<dbReference type="SUPFAM" id="SSF140718">
    <property type="entry name" value="Mediator hinge subcomplex-like"/>
    <property type="match status" value="1"/>
</dbReference>
<name>MED21_PICST</name>
<sequence length="164" mass="17987">MADRLTQLQTCLDQLVEQFNATVNYINTSSEPSLLDEDPTSVSNIAASAPLPANQTQQGSTLGSNRQTVSPSTQAEAESNFENTINELSTDIILKSRQISMLIDSLPGIGVSPESQLKIIDDLSKELQSVEQEQVKKIQEKDKLLKWCESLIVEVATGISETRH</sequence>
<feature type="chain" id="PRO_0000305969" description="Mediator of RNA polymerase II transcription subunit 21">
    <location>
        <begin position="1"/>
        <end position="164"/>
    </location>
</feature>
<feature type="region of interest" description="Disordered" evidence="3">
    <location>
        <begin position="49"/>
        <end position="81"/>
    </location>
</feature>
<feature type="coiled-coil region" evidence="2">
    <location>
        <begin position="114"/>
        <end position="146"/>
    </location>
</feature>
<feature type="compositionally biased region" description="Polar residues" evidence="3">
    <location>
        <begin position="53"/>
        <end position="81"/>
    </location>
</feature>
<accession>A3LS24</accession>
<evidence type="ECO:0000250" key="1"/>
<evidence type="ECO:0000255" key="2"/>
<evidence type="ECO:0000256" key="3">
    <source>
        <dbReference type="SAM" id="MobiDB-lite"/>
    </source>
</evidence>
<evidence type="ECO:0000305" key="4"/>
<organism>
    <name type="scientific">Scheffersomyces stipitis (strain ATCC 58785 / CBS 6054 / NBRC 10063 / NRRL Y-11545)</name>
    <name type="common">Yeast</name>
    <name type="synonym">Pichia stipitis</name>
    <dbReference type="NCBI Taxonomy" id="322104"/>
    <lineage>
        <taxon>Eukaryota</taxon>
        <taxon>Fungi</taxon>
        <taxon>Dikarya</taxon>
        <taxon>Ascomycota</taxon>
        <taxon>Saccharomycotina</taxon>
        <taxon>Pichiomycetes</taxon>
        <taxon>Debaryomycetaceae</taxon>
        <taxon>Scheffersomyces</taxon>
    </lineage>
</organism>